<keyword id="KW-1185">Reference proteome</keyword>
<gene>
    <name type="ordered locus">MMAR_0053</name>
</gene>
<sequence length="201" mass="21775">MAPQEDPEDHVAPAAQRVRAGTLLLANTDLLEPTFRRSVIYIVEHNDGGTLGVVLNRPSETAVHNVLPQWAKLAAKPKTMFIGGPVKRDAALCLATLRVGADPGGVSGLRHVAGRIVMVDLDADPDLIAPLVEGVRIFAGYSGWTIGQLEGEIERDDWIVLSALPSDVLVPPRADLWGRTLRRQPWPLSLLATHPIDVSRN</sequence>
<evidence type="ECO:0000255" key="1">
    <source>
        <dbReference type="HAMAP-Rule" id="MF_00758"/>
    </source>
</evidence>
<name>Y053_MYCMM</name>
<protein>
    <recommendedName>
        <fullName evidence="1">UPF0301 protein MMAR_0053</fullName>
    </recommendedName>
</protein>
<feature type="chain" id="PRO_1000198281" description="UPF0301 protein MMAR_0053">
    <location>
        <begin position="1"/>
        <end position="201"/>
    </location>
</feature>
<reference key="1">
    <citation type="journal article" date="2008" name="Genome Res.">
        <title>Insights from the complete genome sequence of Mycobacterium marinum on the evolution of Mycobacterium tuberculosis.</title>
        <authorList>
            <person name="Stinear T.P."/>
            <person name="Seemann T."/>
            <person name="Harrison P.F."/>
            <person name="Jenkin G.A."/>
            <person name="Davies J.K."/>
            <person name="Johnson P.D."/>
            <person name="Abdellah Z."/>
            <person name="Arrowsmith C."/>
            <person name="Chillingworth T."/>
            <person name="Churcher C."/>
            <person name="Clarke K."/>
            <person name="Cronin A."/>
            <person name="Davis P."/>
            <person name="Goodhead I."/>
            <person name="Holroyd N."/>
            <person name="Jagels K."/>
            <person name="Lord A."/>
            <person name="Moule S."/>
            <person name="Mungall K."/>
            <person name="Norbertczak H."/>
            <person name="Quail M.A."/>
            <person name="Rabbinowitsch E."/>
            <person name="Walker D."/>
            <person name="White B."/>
            <person name="Whitehead S."/>
            <person name="Small P.L."/>
            <person name="Brosch R."/>
            <person name="Ramakrishnan L."/>
            <person name="Fischbach M.A."/>
            <person name="Parkhill J."/>
            <person name="Cole S.T."/>
        </authorList>
    </citation>
    <scope>NUCLEOTIDE SEQUENCE [LARGE SCALE GENOMIC DNA]</scope>
    <source>
        <strain>ATCC BAA-535 / M</strain>
    </source>
</reference>
<proteinExistence type="inferred from homology"/>
<accession>B2HI98</accession>
<organism>
    <name type="scientific">Mycobacterium marinum (strain ATCC BAA-535 / M)</name>
    <dbReference type="NCBI Taxonomy" id="216594"/>
    <lineage>
        <taxon>Bacteria</taxon>
        <taxon>Bacillati</taxon>
        <taxon>Actinomycetota</taxon>
        <taxon>Actinomycetes</taxon>
        <taxon>Mycobacteriales</taxon>
        <taxon>Mycobacteriaceae</taxon>
        <taxon>Mycobacterium</taxon>
        <taxon>Mycobacterium ulcerans group</taxon>
    </lineage>
</organism>
<comment type="similarity">
    <text evidence="1">Belongs to the UPF0301 (AlgH) family.</text>
</comment>
<dbReference type="EMBL" id="CP000854">
    <property type="protein sequence ID" value="ACC38524.1"/>
    <property type="molecule type" value="Genomic_DNA"/>
</dbReference>
<dbReference type="SMR" id="B2HI98"/>
<dbReference type="STRING" id="216594.MMAR_0053"/>
<dbReference type="KEGG" id="mmi:MMAR_0053"/>
<dbReference type="eggNOG" id="COG1678">
    <property type="taxonomic scope" value="Bacteria"/>
</dbReference>
<dbReference type="HOGENOM" id="CLU_057596_2_0_11"/>
<dbReference type="Proteomes" id="UP000001190">
    <property type="component" value="Chromosome"/>
</dbReference>
<dbReference type="GO" id="GO:0005829">
    <property type="term" value="C:cytosol"/>
    <property type="evidence" value="ECO:0007669"/>
    <property type="project" value="TreeGrafter"/>
</dbReference>
<dbReference type="FunFam" id="3.40.1740.10:FF:000002">
    <property type="entry name" value="UPF0301 protein A5636_14805"/>
    <property type="match status" value="1"/>
</dbReference>
<dbReference type="Gene3D" id="3.40.1740.10">
    <property type="entry name" value="VC0467-like"/>
    <property type="match status" value="1"/>
</dbReference>
<dbReference type="HAMAP" id="MF_00758">
    <property type="entry name" value="UPF0301"/>
    <property type="match status" value="1"/>
</dbReference>
<dbReference type="InterPro" id="IPR003774">
    <property type="entry name" value="AlgH-like"/>
</dbReference>
<dbReference type="NCBIfam" id="NF001269">
    <property type="entry name" value="PRK00228.2-1"/>
    <property type="match status" value="1"/>
</dbReference>
<dbReference type="NCBIfam" id="NF001272">
    <property type="entry name" value="PRK00228.2-4"/>
    <property type="match status" value="1"/>
</dbReference>
<dbReference type="PANTHER" id="PTHR30327">
    <property type="entry name" value="UNCHARACTERIZED PROTEIN YQGE"/>
    <property type="match status" value="1"/>
</dbReference>
<dbReference type="PANTHER" id="PTHR30327:SF1">
    <property type="entry name" value="UPF0301 PROTEIN YQGE"/>
    <property type="match status" value="1"/>
</dbReference>
<dbReference type="Pfam" id="PF02622">
    <property type="entry name" value="DUF179"/>
    <property type="match status" value="1"/>
</dbReference>
<dbReference type="SUPFAM" id="SSF143456">
    <property type="entry name" value="VC0467-like"/>
    <property type="match status" value="1"/>
</dbReference>